<name>NUON_ANAPZ</name>
<keyword id="KW-0997">Cell inner membrane</keyword>
<keyword id="KW-1003">Cell membrane</keyword>
<keyword id="KW-0472">Membrane</keyword>
<keyword id="KW-0520">NAD</keyword>
<keyword id="KW-0874">Quinone</keyword>
<keyword id="KW-1278">Translocase</keyword>
<keyword id="KW-0812">Transmembrane</keyword>
<keyword id="KW-1133">Transmembrane helix</keyword>
<keyword id="KW-0813">Transport</keyword>
<keyword id="KW-0830">Ubiquinone</keyword>
<reference key="1">
    <citation type="journal article" date="2006" name="PLoS Genet.">
        <title>Comparative genomics of emerging human ehrlichiosis agents.</title>
        <authorList>
            <person name="Dunning Hotopp J.C."/>
            <person name="Lin M."/>
            <person name="Madupu R."/>
            <person name="Crabtree J."/>
            <person name="Angiuoli S.V."/>
            <person name="Eisen J.A."/>
            <person name="Seshadri R."/>
            <person name="Ren Q."/>
            <person name="Wu M."/>
            <person name="Utterback T.R."/>
            <person name="Smith S."/>
            <person name="Lewis M."/>
            <person name="Khouri H."/>
            <person name="Zhang C."/>
            <person name="Niu H."/>
            <person name="Lin Q."/>
            <person name="Ohashi N."/>
            <person name="Zhi N."/>
            <person name="Nelson W.C."/>
            <person name="Brinkac L.M."/>
            <person name="Dodson R.J."/>
            <person name="Rosovitz M.J."/>
            <person name="Sundaram J.P."/>
            <person name="Daugherty S.C."/>
            <person name="Davidsen T."/>
            <person name="Durkin A.S."/>
            <person name="Gwinn M.L."/>
            <person name="Haft D.H."/>
            <person name="Selengut J.D."/>
            <person name="Sullivan S.A."/>
            <person name="Zafar N."/>
            <person name="Zhou L."/>
            <person name="Benahmed F."/>
            <person name="Forberger H."/>
            <person name="Halpin R."/>
            <person name="Mulligan S."/>
            <person name="Robinson J."/>
            <person name="White O."/>
            <person name="Rikihisa Y."/>
            <person name="Tettelin H."/>
        </authorList>
    </citation>
    <scope>NUCLEOTIDE SEQUENCE [LARGE SCALE GENOMIC DNA]</scope>
    <source>
        <strain>HZ</strain>
    </source>
</reference>
<accession>Q2GKQ9</accession>
<organism>
    <name type="scientific">Anaplasma phagocytophilum (strain HZ)</name>
    <dbReference type="NCBI Taxonomy" id="212042"/>
    <lineage>
        <taxon>Bacteria</taxon>
        <taxon>Pseudomonadati</taxon>
        <taxon>Pseudomonadota</taxon>
        <taxon>Alphaproteobacteria</taxon>
        <taxon>Rickettsiales</taxon>
        <taxon>Anaplasmataceae</taxon>
        <taxon>Anaplasma</taxon>
        <taxon>phagocytophilum group</taxon>
    </lineage>
</organism>
<gene>
    <name evidence="1" type="primary">nuoN</name>
    <name type="ordered locus">APH_0439</name>
</gene>
<comment type="function">
    <text evidence="1">NDH-1 shuttles electrons from NADH, via FMN and iron-sulfur (Fe-S) centers, to quinones in the respiratory chain. The immediate electron acceptor for the enzyme in this species is believed to be ubiquinone. Couples the redox reaction to proton translocation (for every two electrons transferred, four hydrogen ions are translocated across the cytoplasmic membrane), and thus conserves the redox energy in a proton gradient.</text>
</comment>
<comment type="catalytic activity">
    <reaction evidence="1">
        <text>a quinone + NADH + 5 H(+)(in) = a quinol + NAD(+) + 4 H(+)(out)</text>
        <dbReference type="Rhea" id="RHEA:57888"/>
        <dbReference type="ChEBI" id="CHEBI:15378"/>
        <dbReference type="ChEBI" id="CHEBI:24646"/>
        <dbReference type="ChEBI" id="CHEBI:57540"/>
        <dbReference type="ChEBI" id="CHEBI:57945"/>
        <dbReference type="ChEBI" id="CHEBI:132124"/>
    </reaction>
</comment>
<comment type="subunit">
    <text evidence="1">NDH-1 is composed of 14 different subunits. Subunits NuoA, H, J, K, L, M, N constitute the membrane sector of the complex.</text>
</comment>
<comment type="subcellular location">
    <subcellularLocation>
        <location evidence="1">Cell inner membrane</location>
        <topology evidence="1">Multi-pass membrane protein</topology>
    </subcellularLocation>
</comment>
<comment type="similarity">
    <text evidence="1">Belongs to the complex I subunit 2 family.</text>
</comment>
<sequence length="464" mass="50438">MYLSDFLYIVPEITVLGSALALLVLGMFTSERRVRSMSLISVAIAAVLACKELIYFSGEEVSLFGGFVVRTAHTCLARAVVAVSGLFAFLLFFFAKRSYRYEFAVLMLFAFLGTLTLVEAHHFLSFYLSFELIGFASYILVCFNRSSIKASEAAIKFFVLGALSSCIMLYGISLVYGYASEFSLGVVSKVLGGEESLGATFGCALVLVGLLFKLGAVPFHMWIPDTYEGAPTVAVVFFTIVTKTAMVLVFAGLMQGVVIPITGFVWSMLLMAALSMVVGEFSAMQQKNVKRLFAYANIGHIGYVLAGMSTGVVTFKPVLFYVVTYLLINVWIFTVLLRYDDEGFEITDVAGLAAKNPFLAFTFVAALLASAGLPPFSGFFAKYTLLKAIGGVDAFGVPTLVCVVFLCLTSIIPCFYCFRIAKVVYFDVPTGEHSATSRNVGLSIMAFVAVTLSLVVVLLRERII</sequence>
<protein>
    <recommendedName>
        <fullName evidence="1">NADH-quinone oxidoreductase subunit N</fullName>
        <ecNumber evidence="1">7.1.1.-</ecNumber>
    </recommendedName>
    <alternativeName>
        <fullName evidence="1">NADH dehydrogenase I subunit N</fullName>
    </alternativeName>
    <alternativeName>
        <fullName evidence="1">NDH-1 subunit N</fullName>
    </alternativeName>
</protein>
<feature type="chain" id="PRO_0000391096" description="NADH-quinone oxidoreductase subunit N">
    <location>
        <begin position="1"/>
        <end position="464"/>
    </location>
</feature>
<feature type="transmembrane region" description="Helical" evidence="1">
    <location>
        <begin position="6"/>
        <end position="26"/>
    </location>
</feature>
<feature type="transmembrane region" description="Helical" evidence="1">
    <location>
        <begin position="36"/>
        <end position="56"/>
    </location>
</feature>
<feature type="transmembrane region" description="Helical" evidence="1">
    <location>
        <begin position="75"/>
        <end position="95"/>
    </location>
</feature>
<feature type="transmembrane region" description="Helical" evidence="1">
    <location>
        <begin position="101"/>
        <end position="121"/>
    </location>
</feature>
<feature type="transmembrane region" description="Helical" evidence="1">
    <location>
        <begin position="123"/>
        <end position="143"/>
    </location>
</feature>
<feature type="transmembrane region" description="Helical" evidence="1">
    <location>
        <begin position="157"/>
        <end position="177"/>
    </location>
</feature>
<feature type="transmembrane region" description="Helical" evidence="1">
    <location>
        <begin position="197"/>
        <end position="217"/>
    </location>
</feature>
<feature type="transmembrane region" description="Helical" evidence="1">
    <location>
        <begin position="231"/>
        <end position="253"/>
    </location>
</feature>
<feature type="transmembrane region" description="Helical" evidence="1">
    <location>
        <begin position="257"/>
        <end position="279"/>
    </location>
</feature>
<feature type="transmembrane region" description="Helical" evidence="1">
    <location>
        <begin position="293"/>
        <end position="313"/>
    </location>
</feature>
<feature type="transmembrane region" description="Helical" evidence="1">
    <location>
        <begin position="317"/>
        <end position="337"/>
    </location>
</feature>
<feature type="transmembrane region" description="Helical" evidence="1">
    <location>
        <begin position="360"/>
        <end position="380"/>
    </location>
</feature>
<feature type="transmembrane region" description="Helical" evidence="1">
    <location>
        <begin position="395"/>
        <end position="415"/>
    </location>
</feature>
<feature type="transmembrane region" description="Helical" evidence="1">
    <location>
        <begin position="439"/>
        <end position="459"/>
    </location>
</feature>
<evidence type="ECO:0000255" key="1">
    <source>
        <dbReference type="HAMAP-Rule" id="MF_00445"/>
    </source>
</evidence>
<dbReference type="EC" id="7.1.1.-" evidence="1"/>
<dbReference type="EMBL" id="CP000235">
    <property type="protein sequence ID" value="ABD43417.1"/>
    <property type="molecule type" value="Genomic_DNA"/>
</dbReference>
<dbReference type="SMR" id="Q2GKQ9"/>
<dbReference type="STRING" id="212042.APH_0439"/>
<dbReference type="PaxDb" id="212042-APH_0439"/>
<dbReference type="EnsemblBacteria" id="ABD43417">
    <property type="protein sequence ID" value="ABD43417"/>
    <property type="gene ID" value="APH_0439"/>
</dbReference>
<dbReference type="KEGG" id="aph:APH_0439"/>
<dbReference type="eggNOG" id="COG1007">
    <property type="taxonomic scope" value="Bacteria"/>
</dbReference>
<dbReference type="HOGENOM" id="CLU_007100_1_3_5"/>
<dbReference type="Proteomes" id="UP000001943">
    <property type="component" value="Chromosome"/>
</dbReference>
<dbReference type="GO" id="GO:0005886">
    <property type="term" value="C:plasma membrane"/>
    <property type="evidence" value="ECO:0007669"/>
    <property type="project" value="UniProtKB-SubCell"/>
</dbReference>
<dbReference type="GO" id="GO:0008137">
    <property type="term" value="F:NADH dehydrogenase (ubiquinone) activity"/>
    <property type="evidence" value="ECO:0007669"/>
    <property type="project" value="InterPro"/>
</dbReference>
<dbReference type="GO" id="GO:0050136">
    <property type="term" value="F:NADH:ubiquinone reductase (non-electrogenic) activity"/>
    <property type="evidence" value="ECO:0007669"/>
    <property type="project" value="UniProtKB-UniRule"/>
</dbReference>
<dbReference type="GO" id="GO:0048038">
    <property type="term" value="F:quinone binding"/>
    <property type="evidence" value="ECO:0007669"/>
    <property type="project" value="UniProtKB-KW"/>
</dbReference>
<dbReference type="GO" id="GO:0042773">
    <property type="term" value="P:ATP synthesis coupled electron transport"/>
    <property type="evidence" value="ECO:0007669"/>
    <property type="project" value="InterPro"/>
</dbReference>
<dbReference type="HAMAP" id="MF_00445">
    <property type="entry name" value="NDH1_NuoN_1"/>
    <property type="match status" value="1"/>
</dbReference>
<dbReference type="InterPro" id="IPR010096">
    <property type="entry name" value="NADH-Q_OxRdtase_suN/2"/>
</dbReference>
<dbReference type="InterPro" id="IPR001750">
    <property type="entry name" value="ND/Mrp_TM"/>
</dbReference>
<dbReference type="PANTHER" id="PTHR22773">
    <property type="entry name" value="NADH DEHYDROGENASE"/>
    <property type="match status" value="1"/>
</dbReference>
<dbReference type="Pfam" id="PF00361">
    <property type="entry name" value="Proton_antipo_M"/>
    <property type="match status" value="1"/>
</dbReference>
<proteinExistence type="inferred from homology"/>